<name>LEUD_CORA7</name>
<reference key="1">
    <citation type="journal article" date="2010" name="BMC Genomics">
        <title>Complete genome sequence and lifestyle of black-pigmented Corynebacterium aurimucosum ATCC 700975 (formerly C. nigricans CN-1) isolated from a vaginal swab of a woman with spontaneous abortion.</title>
        <authorList>
            <person name="Trost E."/>
            <person name="Gotker S."/>
            <person name="Schneider J."/>
            <person name="Schneiker-Bekel S."/>
            <person name="Szczepanowski R."/>
            <person name="Tilker A."/>
            <person name="Viehoever P."/>
            <person name="Arnold W."/>
            <person name="Bekel T."/>
            <person name="Blom J."/>
            <person name="Gartemann K.H."/>
            <person name="Linke B."/>
            <person name="Goesmann A."/>
            <person name="Puhler A."/>
            <person name="Shukla S.K."/>
            <person name="Tauch A."/>
        </authorList>
    </citation>
    <scope>NUCLEOTIDE SEQUENCE [LARGE SCALE GENOMIC DNA]</scope>
    <source>
        <strain>ATCC 700975 / DSM 44827 / CIP 107346 / CN-1</strain>
    </source>
</reference>
<keyword id="KW-0028">Amino-acid biosynthesis</keyword>
<keyword id="KW-0100">Branched-chain amino acid biosynthesis</keyword>
<keyword id="KW-0432">Leucine biosynthesis</keyword>
<keyword id="KW-0456">Lyase</keyword>
<keyword id="KW-1185">Reference proteome</keyword>
<dbReference type="EC" id="4.2.1.33" evidence="1"/>
<dbReference type="EMBL" id="CP001601">
    <property type="protein sequence ID" value="ACP32749.1"/>
    <property type="molecule type" value="Genomic_DNA"/>
</dbReference>
<dbReference type="RefSeq" id="WP_010186856.1">
    <property type="nucleotide sequence ID" value="NC_012590.1"/>
</dbReference>
<dbReference type="SMR" id="C3PFZ5"/>
<dbReference type="STRING" id="548476.cauri_1156"/>
<dbReference type="GeneID" id="31923779"/>
<dbReference type="KEGG" id="car:cauri_1156"/>
<dbReference type="eggNOG" id="COG0066">
    <property type="taxonomic scope" value="Bacteria"/>
</dbReference>
<dbReference type="HOGENOM" id="CLU_081378_0_1_11"/>
<dbReference type="OrthoDB" id="9777465at2"/>
<dbReference type="UniPathway" id="UPA00048">
    <property type="reaction ID" value="UER00071"/>
</dbReference>
<dbReference type="Proteomes" id="UP000002077">
    <property type="component" value="Chromosome"/>
</dbReference>
<dbReference type="GO" id="GO:0009316">
    <property type="term" value="C:3-isopropylmalate dehydratase complex"/>
    <property type="evidence" value="ECO:0007669"/>
    <property type="project" value="InterPro"/>
</dbReference>
<dbReference type="GO" id="GO:0003861">
    <property type="term" value="F:3-isopropylmalate dehydratase activity"/>
    <property type="evidence" value="ECO:0007669"/>
    <property type="project" value="UniProtKB-UniRule"/>
</dbReference>
<dbReference type="GO" id="GO:0009098">
    <property type="term" value="P:L-leucine biosynthetic process"/>
    <property type="evidence" value="ECO:0007669"/>
    <property type="project" value="UniProtKB-UniRule"/>
</dbReference>
<dbReference type="CDD" id="cd01577">
    <property type="entry name" value="IPMI_Swivel"/>
    <property type="match status" value="1"/>
</dbReference>
<dbReference type="FunFam" id="3.20.19.10:FF:000003">
    <property type="entry name" value="3-isopropylmalate dehydratase small subunit"/>
    <property type="match status" value="1"/>
</dbReference>
<dbReference type="Gene3D" id="3.20.19.10">
    <property type="entry name" value="Aconitase, domain 4"/>
    <property type="match status" value="1"/>
</dbReference>
<dbReference type="HAMAP" id="MF_01031">
    <property type="entry name" value="LeuD_type1"/>
    <property type="match status" value="1"/>
</dbReference>
<dbReference type="InterPro" id="IPR004431">
    <property type="entry name" value="3-IsopropMal_deHydase_ssu"/>
</dbReference>
<dbReference type="InterPro" id="IPR015928">
    <property type="entry name" value="Aconitase/3IPM_dehydase_swvl"/>
</dbReference>
<dbReference type="InterPro" id="IPR000573">
    <property type="entry name" value="AconitaseA/IPMdHydase_ssu_swvl"/>
</dbReference>
<dbReference type="InterPro" id="IPR033940">
    <property type="entry name" value="IPMI_Swivel"/>
</dbReference>
<dbReference type="InterPro" id="IPR050075">
    <property type="entry name" value="LeuD"/>
</dbReference>
<dbReference type="NCBIfam" id="TIGR00171">
    <property type="entry name" value="leuD"/>
    <property type="match status" value="1"/>
</dbReference>
<dbReference type="NCBIfam" id="NF002458">
    <property type="entry name" value="PRK01641.1"/>
    <property type="match status" value="1"/>
</dbReference>
<dbReference type="PANTHER" id="PTHR43345:SF5">
    <property type="entry name" value="3-ISOPROPYLMALATE DEHYDRATASE SMALL SUBUNIT"/>
    <property type="match status" value="1"/>
</dbReference>
<dbReference type="PANTHER" id="PTHR43345">
    <property type="entry name" value="3-ISOPROPYLMALATE DEHYDRATASE SMALL SUBUNIT 2-RELATED-RELATED"/>
    <property type="match status" value="1"/>
</dbReference>
<dbReference type="Pfam" id="PF00694">
    <property type="entry name" value="Aconitase_C"/>
    <property type="match status" value="1"/>
</dbReference>
<dbReference type="SUPFAM" id="SSF52016">
    <property type="entry name" value="LeuD/IlvD-like"/>
    <property type="match status" value="1"/>
</dbReference>
<sequence length="196" mass="21860">MEKFVTHTGVGVPLRVSNVDTDQIIPARYLKSVKRTGFADGLFSNWRSDENFILNQEPFKEGSVLFAGPDFGTGSSREHAVWALAEYGFKAVFSSRFADIFRGNSGKAGLLTGLMEQEDIELIWKQLESGETETTVDLEARTVTVGGNSYTFEIDDYTRWRLMEGLDDIGLTLRNEGDIEAFESTRPGFKPRVVAS</sequence>
<protein>
    <recommendedName>
        <fullName evidence="1">3-isopropylmalate dehydratase small subunit</fullName>
        <ecNumber evidence="1">4.2.1.33</ecNumber>
    </recommendedName>
    <alternativeName>
        <fullName evidence="1">Alpha-IPM isomerase</fullName>
        <shortName evidence="1">IPMI</shortName>
    </alternativeName>
    <alternativeName>
        <fullName evidence="1">Isopropylmalate isomerase</fullName>
    </alternativeName>
</protein>
<proteinExistence type="inferred from homology"/>
<feature type="chain" id="PRO_1000149410" description="3-isopropylmalate dehydratase small subunit">
    <location>
        <begin position="1"/>
        <end position="196"/>
    </location>
</feature>
<organism>
    <name type="scientific">Corynebacterium aurimucosum (strain ATCC 700975 / DSM 44827 / CIP 107346 / CN-1)</name>
    <name type="common">Corynebacterium nigricans</name>
    <dbReference type="NCBI Taxonomy" id="548476"/>
    <lineage>
        <taxon>Bacteria</taxon>
        <taxon>Bacillati</taxon>
        <taxon>Actinomycetota</taxon>
        <taxon>Actinomycetes</taxon>
        <taxon>Mycobacteriales</taxon>
        <taxon>Corynebacteriaceae</taxon>
        <taxon>Corynebacterium</taxon>
    </lineage>
</organism>
<comment type="function">
    <text evidence="1">Catalyzes the isomerization between 2-isopropylmalate and 3-isopropylmalate, via the formation of 2-isopropylmaleate.</text>
</comment>
<comment type="catalytic activity">
    <reaction evidence="1">
        <text>(2R,3S)-3-isopropylmalate = (2S)-2-isopropylmalate</text>
        <dbReference type="Rhea" id="RHEA:32287"/>
        <dbReference type="ChEBI" id="CHEBI:1178"/>
        <dbReference type="ChEBI" id="CHEBI:35121"/>
        <dbReference type="EC" id="4.2.1.33"/>
    </reaction>
</comment>
<comment type="pathway">
    <text evidence="1">Amino-acid biosynthesis; L-leucine biosynthesis; L-leucine from 3-methyl-2-oxobutanoate: step 2/4.</text>
</comment>
<comment type="subunit">
    <text evidence="1">Heterodimer of LeuC and LeuD.</text>
</comment>
<comment type="similarity">
    <text evidence="1">Belongs to the LeuD family. LeuD type 1 subfamily.</text>
</comment>
<evidence type="ECO:0000255" key="1">
    <source>
        <dbReference type="HAMAP-Rule" id="MF_01031"/>
    </source>
</evidence>
<accession>C3PFZ5</accession>
<gene>
    <name evidence="1" type="primary">leuD</name>
    <name type="ordered locus">cauri_1156</name>
</gene>